<keyword id="KW-0007">Acetylation</keyword>
<keyword id="KW-0156">Chromatin regulator</keyword>
<keyword id="KW-0378">Hydrolase</keyword>
<keyword id="KW-0479">Metal-binding</keyword>
<keyword id="KW-0539">Nucleus</keyword>
<keyword id="KW-1185">Reference proteome</keyword>
<keyword id="KW-0678">Repressor</keyword>
<keyword id="KW-0804">Transcription</keyword>
<keyword id="KW-0805">Transcription regulation</keyword>
<keyword id="KW-0862">Zinc</keyword>
<feature type="chain" id="PRO_0000280085" description="Histone deacetylase 6">
    <location>
        <begin position="1"/>
        <end position="471"/>
    </location>
</feature>
<feature type="region of interest" description="Histone deacetylase">
    <location>
        <begin position="20"/>
        <end position="333"/>
    </location>
</feature>
<feature type="region of interest" description="Disordered" evidence="4">
    <location>
        <begin position="389"/>
        <end position="471"/>
    </location>
</feature>
<feature type="compositionally biased region" description="Acidic residues" evidence="4">
    <location>
        <begin position="453"/>
        <end position="463"/>
    </location>
</feature>
<feature type="active site" description="Proton donor/acceptor" evidence="2">
    <location>
        <position position="153"/>
    </location>
</feature>
<feature type="binding site" evidence="2">
    <location>
        <position position="188"/>
    </location>
    <ligand>
        <name>Zn(2+)</name>
        <dbReference type="ChEBI" id="CHEBI:29105"/>
    </ligand>
</feature>
<feature type="binding site" evidence="2">
    <location>
        <position position="190"/>
    </location>
    <ligand>
        <name>Zn(2+)</name>
        <dbReference type="ChEBI" id="CHEBI:29105"/>
    </ligand>
</feature>
<feature type="binding site" evidence="2">
    <location>
        <position position="276"/>
    </location>
    <ligand>
        <name>Zn(2+)</name>
        <dbReference type="ChEBI" id="CHEBI:29105"/>
    </ligand>
</feature>
<feature type="site" description="Polarizes the scissile carbonyl of the substrate" evidence="2">
    <location>
        <position position="315"/>
    </location>
</feature>
<feature type="modified residue" description="N-acetylmethionine" evidence="3">
    <location>
        <position position="1"/>
    </location>
</feature>
<feature type="mutagenesis site" description="In sil1; suppression of transgene silencing." evidence="1">
    <original>G</original>
    <variation>R</variation>
    <location>
        <position position="16"/>
    </location>
</feature>
<feature type="mutagenesis site" description="In axe1-1; suppression of transgene silencing." evidence="24">
    <original>G</original>
    <variation>R</variation>
    <location>
        <position position="127"/>
    </location>
</feature>
<feature type="mutagenesis site" description="In axe1-2; suppression of transgene silencing." evidence="9">
    <original>G</original>
    <variation>D</variation>
    <location>
        <position position="284"/>
    </location>
</feature>
<feature type="mutagenesis site" description="In axe1-3; suppression of transgene silencing." evidence="6">
    <original>A</original>
    <variation>V</variation>
    <location>
        <position position="294"/>
    </location>
</feature>
<feature type="mutagenesis site" description="In rts1-2; suppression of transgene silencing." evidence="6">
    <location>
        <begin position="459"/>
        <end position="471"/>
    </location>
</feature>
<feature type="sequence conflict" description="In Ref. 1; AAG28475." evidence="6" ref="1">
    <original>G</original>
    <variation>E</variation>
    <location>
        <position position="313"/>
    </location>
</feature>
<proteinExistence type="evidence at protein level"/>
<protein>
    <recommendedName>
        <fullName evidence="19 20">Histone deacetylase 6</fullName>
        <shortName evidence="19 20">AtHDA6</shortName>
        <ecNumber evidence="12">3.5.1.98</ecNumber>
    </recommendedName>
</protein>
<organism>
    <name type="scientific">Arabidopsis thaliana</name>
    <name type="common">Mouse-ear cress</name>
    <dbReference type="NCBI Taxonomy" id="3702"/>
    <lineage>
        <taxon>Eukaryota</taxon>
        <taxon>Viridiplantae</taxon>
        <taxon>Streptophyta</taxon>
        <taxon>Embryophyta</taxon>
        <taxon>Tracheophyta</taxon>
        <taxon>Spermatophyta</taxon>
        <taxon>Magnoliopsida</taxon>
        <taxon>eudicotyledons</taxon>
        <taxon>Gunneridae</taxon>
        <taxon>Pentapetalae</taxon>
        <taxon>rosids</taxon>
        <taxon>malvids</taxon>
        <taxon>Brassicales</taxon>
        <taxon>Brassicaceae</taxon>
        <taxon>Camelineae</taxon>
        <taxon>Arabidopsis</taxon>
    </lineage>
</organism>
<accession>Q9FML2</accession>
<accession>Q9FVE5</accession>
<gene>
    <name evidence="19 20" type="primary">HDA6</name>
    <name evidence="18" type="synonym">RPD3B</name>
    <name evidence="22" type="ordered locus">At5g63110</name>
    <name evidence="23" type="ORF">MDC12.7</name>
</gene>
<comment type="function">
    <text evidence="6 8 9 11 12 14 16">Responsible for the deacetylation of lysine residues on the N-terminal part of the core histones (H2A, H2B, H3 and H4). Might remove acetyl residues only from specific targets, such as rDNA repeats or complex transgenes. Histone deacetylation gives a tag for epigenetic repression and plays an important role in transcriptional regulation, cell cycle progression and developmental events. Histone deacetylases act via the formation of large multiprotein complexes. Required for rRNA gene silencing in nucleolar dominance. Plays a role in transgene silencing, but this effect seems to bee independent of the histone deacetylase activity (PubMed:11340181, PubMed:12486004, PubMed:15037732, PubMed:16648464). Part of the AS1 repressor complex to regulate the KNOX expression in leaf development (PubMed:23271976). Binds to KNAT1, KNAT2, and KNATM chromatin (PubMed:23271976). Involved in the regulation of flowering time (PubMed:21398257, PubMed:25922987). Forms a histone deacetylase complex with HDA5, FLD and MSI4/FVE that represses FLC gene expression to control flowering time (PubMed:21398257, PubMed:25922987).</text>
</comment>
<comment type="catalytic activity">
    <reaction evidence="12">
        <text>N(6)-acetyl-L-lysyl-[histone] + H2O = L-lysyl-[histone] + acetate</text>
        <dbReference type="Rhea" id="RHEA:58196"/>
        <dbReference type="Rhea" id="RHEA-COMP:9845"/>
        <dbReference type="Rhea" id="RHEA-COMP:11338"/>
        <dbReference type="ChEBI" id="CHEBI:15377"/>
        <dbReference type="ChEBI" id="CHEBI:29969"/>
        <dbReference type="ChEBI" id="CHEBI:30089"/>
        <dbReference type="ChEBI" id="CHEBI:61930"/>
        <dbReference type="EC" id="3.5.1.98"/>
    </reaction>
</comment>
<comment type="cofactor">
    <cofactor evidence="2">
        <name>Zn(2+)</name>
        <dbReference type="ChEBI" id="CHEBI:29105"/>
    </cofactor>
    <text evidence="2">Binds 1 zinc ion per subunit.</text>
</comment>
<comment type="activity regulation">
    <text evidence="11">Inhibited by trichostatin A.</text>
</comment>
<comment type="subunit">
    <text evidence="7 12 13 14 15 16 17">Interacts with Coi1, which functions in an SCF complex that recruits regulators for ubiquitination (PubMed:12445118). Interacts with AHL22 (PubMed:12445118, PubMed:22442143). Interacts with AS1 (PubMed:23271976). Part of the AS1 repressor complex composed of AS1, LBD6/AS2 and HDA6 (PubMed:23271976). Binds to EBS and SHL (PubMed:25281686). Interacts with MBD6 (PubMed:28229965). Interacts with HDA5 (PubMed:25922987). Interacts with FLD (PubMed:21398257).</text>
</comment>
<comment type="interaction">
    <interactant intactId="EBI-639608">
        <id>Q9FML2</id>
    </interactant>
    <interactant intactId="EBI-401159">
        <id>O04197</id>
        <label>COI1</label>
    </interactant>
    <organismsDiffer>false</organismsDiffer>
    <experiments>3</experiments>
</comment>
<comment type="interaction">
    <interactant intactId="EBI-639608">
        <id>Q9FML2</id>
    </interactant>
    <interactant intactId="EBI-593576">
        <id>O24606</id>
        <label>EIN3</label>
    </interactant>
    <organismsDiffer>false</organismsDiffer>
    <experiments>2</experiments>
</comment>
<comment type="interaction">
    <interactant intactId="EBI-639608">
        <id>Q9FML2</id>
    </interactant>
    <interactant intactId="EBI-1388539">
        <id>Q9LMA8</id>
        <label>TIFY10A</label>
    </interactant>
    <organismsDiffer>false</organismsDiffer>
    <experiments>4</experiments>
</comment>
<comment type="subcellular location">
    <subcellularLocation>
        <location evidence="11">Nucleus</location>
        <location evidence="11">Nucleolus</location>
    </subcellularLocation>
    <subcellularLocation>
        <location evidence="14">Nucleus</location>
    </subcellularLocation>
</comment>
<comment type="tissue specificity">
    <text evidence="5">Not detected in leaves, stems, flowers and young siliques.</text>
</comment>
<comment type="induction">
    <text evidence="10">By jasmonic acid and ethylene.</text>
</comment>
<comment type="disruption phenotype">
    <text evidence="14">Curling and serrated leaves. Down curling phenotype on both the distal and lateral axis.</text>
</comment>
<comment type="miscellaneous">
    <text>HDA6 mutations induce high acetylation of histone H4, increased methylation of histone H3 'Lys-4' and hypomethylation of DNA at particular loci, such as the rDNA repeats.</text>
</comment>
<comment type="similarity">
    <text evidence="21">Belongs to the histone deacetylase family. HD type 1 subfamily.</text>
</comment>
<sequence length="471" mass="52652">MEADESGISLPSGPDGRKRRVSYFYEPTIGDYYYGQGHPMKPHRIRMAHSLIIHYHLHRRLEISRPSLADASDIGRFHSPEYVDFLASVSPESMGDPSAARNLRRFNVGEDCPVFDGLFDFCRASAGGSIGAAVKLNRQDADIAINWGGGLHHAKKSEASGFCYVNDIVLGILELLKMFKRVLYIDIDVHHGDGVEEAFYTTDRVMTVSFHKFGDFFPGTGHIRDVGAEKGKYYALNVPLNDGMDDESFRSLFRPLIQKVMEVYQPEAVVLQCGADSLSGDRLGCFNLSVKGHADCLRFLRSYNVPLMVLGGGGYTIRNVARCWCYETAVAVGVEPDNKLPYNEYFEYFGPDYTLHVDPSPMENLNTPKDMERIRNTLLEQLSGLIHAPSVQFQHTPPVNRVLDEPEDDMETRPKPRIWSGTATYESDSDDDDKPLHGYSCRGGATTDRDSTGEDEMDDDNPEPDVNPPSS</sequence>
<name>HDA6_ARATH</name>
<evidence type="ECO:0000250" key="1"/>
<evidence type="ECO:0000250" key="2">
    <source>
        <dbReference type="UniProtKB" id="Q8GXJ1"/>
    </source>
</evidence>
<evidence type="ECO:0000255" key="3">
    <source>
        <dbReference type="PROSITE-ProRule" id="PRU00004"/>
    </source>
</evidence>
<evidence type="ECO:0000256" key="4">
    <source>
        <dbReference type="SAM" id="MobiDB-lite"/>
    </source>
</evidence>
<evidence type="ECO:0000269" key="5">
    <source>
    </source>
</evidence>
<evidence type="ECO:0000269" key="6">
    <source>
    </source>
</evidence>
<evidence type="ECO:0000269" key="7">
    <source>
    </source>
</evidence>
<evidence type="ECO:0000269" key="8">
    <source>
    </source>
</evidence>
<evidence type="ECO:0000269" key="9">
    <source>
    </source>
</evidence>
<evidence type="ECO:0000269" key="10">
    <source>
    </source>
</evidence>
<evidence type="ECO:0000269" key="11">
    <source>
    </source>
</evidence>
<evidence type="ECO:0000269" key="12">
    <source>
    </source>
</evidence>
<evidence type="ECO:0000269" key="13">
    <source>
    </source>
</evidence>
<evidence type="ECO:0000269" key="14">
    <source>
    </source>
</evidence>
<evidence type="ECO:0000269" key="15">
    <source>
    </source>
</evidence>
<evidence type="ECO:0000269" key="16">
    <source>
    </source>
</evidence>
<evidence type="ECO:0000269" key="17">
    <source>
    </source>
</evidence>
<evidence type="ECO:0000303" key="18">
    <source>
    </source>
</evidence>
<evidence type="ECO:0000303" key="19">
    <source>
    </source>
</evidence>
<evidence type="ECO:0000303" key="20">
    <source>
    </source>
</evidence>
<evidence type="ECO:0000305" key="21"/>
<evidence type="ECO:0000312" key="22">
    <source>
        <dbReference type="Araport" id="AT5G63110"/>
    </source>
</evidence>
<evidence type="ECO:0000312" key="23">
    <source>
        <dbReference type="EMBL" id="BAB10553.1"/>
    </source>
</evidence>
<evidence type="ECO:0007744" key="24">
    <source>
    </source>
</evidence>
<dbReference type="EC" id="3.5.1.98" evidence="12"/>
<dbReference type="EMBL" id="AF195548">
    <property type="protein sequence ID" value="AAG28475.1"/>
    <property type="molecule type" value="mRNA"/>
</dbReference>
<dbReference type="EMBL" id="AB008265">
    <property type="protein sequence ID" value="BAB10553.1"/>
    <property type="molecule type" value="Genomic_DNA"/>
</dbReference>
<dbReference type="EMBL" id="CP002688">
    <property type="protein sequence ID" value="AED97705.1"/>
    <property type="molecule type" value="Genomic_DNA"/>
</dbReference>
<dbReference type="EMBL" id="AY142660">
    <property type="protein sequence ID" value="AAN13198.1"/>
    <property type="molecule type" value="mRNA"/>
</dbReference>
<dbReference type="EMBL" id="AY072201">
    <property type="protein sequence ID" value="AAL60022.1"/>
    <property type="molecule type" value="mRNA"/>
</dbReference>
<dbReference type="EMBL" id="AY088314">
    <property type="protein sequence ID" value="AAM65853.1"/>
    <property type="molecule type" value="mRNA"/>
</dbReference>
<dbReference type="RefSeq" id="NP_201116.1">
    <property type="nucleotide sequence ID" value="NM_125705.4"/>
</dbReference>
<dbReference type="SMR" id="Q9FML2"/>
<dbReference type="BioGRID" id="21674">
    <property type="interactions" value="20"/>
</dbReference>
<dbReference type="DIP" id="DIP-33452N"/>
<dbReference type="FunCoup" id="Q9FML2">
    <property type="interactions" value="3244"/>
</dbReference>
<dbReference type="IntAct" id="Q9FML2">
    <property type="interactions" value="7"/>
</dbReference>
<dbReference type="STRING" id="3702.Q9FML2"/>
<dbReference type="iPTMnet" id="Q9FML2"/>
<dbReference type="PaxDb" id="3702-AT5G63110.1"/>
<dbReference type="ProteomicsDB" id="230310"/>
<dbReference type="EnsemblPlants" id="AT5G63110.1">
    <property type="protein sequence ID" value="AT5G63110.1"/>
    <property type="gene ID" value="AT5G63110"/>
</dbReference>
<dbReference type="GeneID" id="836431"/>
<dbReference type="Gramene" id="AT5G63110.1">
    <property type="protein sequence ID" value="AT5G63110.1"/>
    <property type="gene ID" value="AT5G63110"/>
</dbReference>
<dbReference type="KEGG" id="ath:AT5G63110"/>
<dbReference type="Araport" id="AT5G63110"/>
<dbReference type="TAIR" id="AT5G63110">
    <property type="gene designation" value="HDA6"/>
</dbReference>
<dbReference type="eggNOG" id="KOG1342">
    <property type="taxonomic scope" value="Eukaryota"/>
</dbReference>
<dbReference type="HOGENOM" id="CLU_007727_7_12_1"/>
<dbReference type="InParanoid" id="Q9FML2"/>
<dbReference type="OMA" id="GKIMEWY"/>
<dbReference type="OrthoDB" id="1918432at2759"/>
<dbReference type="PhylomeDB" id="Q9FML2"/>
<dbReference type="PRO" id="PR:Q9FML2"/>
<dbReference type="Proteomes" id="UP000006548">
    <property type="component" value="Chromosome 5"/>
</dbReference>
<dbReference type="ExpressionAtlas" id="Q9FML2">
    <property type="expression patterns" value="baseline and differential"/>
</dbReference>
<dbReference type="GO" id="GO:0009941">
    <property type="term" value="C:chloroplast envelope"/>
    <property type="evidence" value="ECO:0007005"/>
    <property type="project" value="TAIR"/>
</dbReference>
<dbReference type="GO" id="GO:0005730">
    <property type="term" value="C:nucleolus"/>
    <property type="evidence" value="ECO:0007669"/>
    <property type="project" value="UniProtKB-SubCell"/>
</dbReference>
<dbReference type="GO" id="GO:0005634">
    <property type="term" value="C:nucleus"/>
    <property type="evidence" value="ECO:0000314"/>
    <property type="project" value="TAIR"/>
</dbReference>
<dbReference type="GO" id="GO:0070822">
    <property type="term" value="C:Sin3-type complex"/>
    <property type="evidence" value="ECO:0000314"/>
    <property type="project" value="TAIR"/>
</dbReference>
<dbReference type="GO" id="GO:0004407">
    <property type="term" value="F:histone deacetylase activity"/>
    <property type="evidence" value="ECO:0000315"/>
    <property type="project" value="TAIR"/>
</dbReference>
<dbReference type="GO" id="GO:0141221">
    <property type="term" value="F:histone deacetylase activity, hydrolytic mechanism"/>
    <property type="evidence" value="ECO:0007669"/>
    <property type="project" value="UniProtKB-EC"/>
</dbReference>
<dbReference type="GO" id="GO:0008270">
    <property type="term" value="F:zinc ion binding"/>
    <property type="evidence" value="ECO:0000250"/>
    <property type="project" value="UniProtKB"/>
</dbReference>
<dbReference type="GO" id="GO:0006325">
    <property type="term" value="P:chromatin organization"/>
    <property type="evidence" value="ECO:0007669"/>
    <property type="project" value="UniProtKB-KW"/>
</dbReference>
<dbReference type="GO" id="GO:0009793">
    <property type="term" value="P:embryo development ending in seed dormancy"/>
    <property type="evidence" value="ECO:0000315"/>
    <property type="project" value="TAIR"/>
</dbReference>
<dbReference type="GO" id="GO:0016441">
    <property type="term" value="P:post-transcriptional gene silencing"/>
    <property type="evidence" value="ECO:0000315"/>
    <property type="project" value="TAIR"/>
</dbReference>
<dbReference type="GO" id="GO:0048510">
    <property type="term" value="P:regulation of timing of transition from vegetative to reproductive phase"/>
    <property type="evidence" value="ECO:0000315"/>
    <property type="project" value="UniProtKB"/>
</dbReference>
<dbReference type="GO" id="GO:0009737">
    <property type="term" value="P:response to abscisic acid"/>
    <property type="evidence" value="ECO:0000315"/>
    <property type="project" value="TAIR"/>
</dbReference>
<dbReference type="GO" id="GO:0009651">
    <property type="term" value="P:response to salt stress"/>
    <property type="evidence" value="ECO:0000315"/>
    <property type="project" value="TAIR"/>
</dbReference>
<dbReference type="GO" id="GO:0010431">
    <property type="term" value="P:seed maturation"/>
    <property type="evidence" value="ECO:0000315"/>
    <property type="project" value="TAIR"/>
</dbReference>
<dbReference type="GO" id="GO:0010228">
    <property type="term" value="P:vegetative to reproductive phase transition of meristem"/>
    <property type="evidence" value="ECO:0000315"/>
    <property type="project" value="TAIR"/>
</dbReference>
<dbReference type="CDD" id="cd09991">
    <property type="entry name" value="HDAC_classI"/>
    <property type="match status" value="1"/>
</dbReference>
<dbReference type="FunFam" id="3.40.800.20:FF:000001">
    <property type="entry name" value="Histone deacetylase"/>
    <property type="match status" value="1"/>
</dbReference>
<dbReference type="Gene3D" id="3.40.800.20">
    <property type="entry name" value="Histone deacetylase domain"/>
    <property type="match status" value="1"/>
</dbReference>
<dbReference type="InterPro" id="IPR050284">
    <property type="entry name" value="HDAC_PDAC"/>
</dbReference>
<dbReference type="InterPro" id="IPR000286">
    <property type="entry name" value="His_deacetylse"/>
</dbReference>
<dbReference type="InterPro" id="IPR003084">
    <property type="entry name" value="His_deacetylse_1"/>
</dbReference>
<dbReference type="InterPro" id="IPR023801">
    <property type="entry name" value="His_deacetylse_dom"/>
</dbReference>
<dbReference type="InterPro" id="IPR037138">
    <property type="entry name" value="His_deacetylse_dom_sf"/>
</dbReference>
<dbReference type="InterPro" id="IPR023696">
    <property type="entry name" value="Ureohydrolase_dom_sf"/>
</dbReference>
<dbReference type="PANTHER" id="PTHR10625:SF10">
    <property type="entry name" value="HISTONE DEACETYLASE HDAC1"/>
    <property type="match status" value="1"/>
</dbReference>
<dbReference type="PANTHER" id="PTHR10625">
    <property type="entry name" value="HISTONE DEACETYLASE HDAC1-RELATED"/>
    <property type="match status" value="1"/>
</dbReference>
<dbReference type="Pfam" id="PF00850">
    <property type="entry name" value="Hist_deacetyl"/>
    <property type="match status" value="1"/>
</dbReference>
<dbReference type="PIRSF" id="PIRSF037913">
    <property type="entry name" value="His_deacetylse_1"/>
    <property type="match status" value="1"/>
</dbReference>
<dbReference type="PRINTS" id="PR01270">
    <property type="entry name" value="HDASUPER"/>
</dbReference>
<dbReference type="PRINTS" id="PR01271">
    <property type="entry name" value="HISDACETLASE"/>
</dbReference>
<dbReference type="SUPFAM" id="SSF52768">
    <property type="entry name" value="Arginase/deacetylase"/>
    <property type="match status" value="1"/>
</dbReference>
<reference key="1">
    <citation type="journal article" date="2000" name="Plant Mol. Biol.">
        <title>Functional analysis of a RPD3 histone deacetylase homologue in Arabidopsis thaliana.</title>
        <authorList>
            <person name="Wu K."/>
            <person name="Malik K."/>
            <person name="Tian L."/>
            <person name="Brown D."/>
            <person name="Miki B."/>
        </authorList>
    </citation>
    <scope>NUCLEOTIDE SEQUENCE [MRNA]</scope>
    <scope>TISSUE SPECIFICITY</scope>
    <source>
        <strain>cv. Columbia</strain>
    </source>
</reference>
<reference key="2">
    <citation type="journal article" date="1997" name="DNA Res.">
        <title>Structural analysis of Arabidopsis thaliana chromosome 5. III. Sequence features of the regions of 1,191,918 bp covered by seventeen physically assigned P1 clones.</title>
        <authorList>
            <person name="Nakamura Y."/>
            <person name="Sato S."/>
            <person name="Kaneko T."/>
            <person name="Kotani H."/>
            <person name="Asamizu E."/>
            <person name="Miyajima N."/>
            <person name="Tabata S."/>
        </authorList>
    </citation>
    <scope>NUCLEOTIDE SEQUENCE [LARGE SCALE GENOMIC DNA]</scope>
    <source>
        <strain>cv. Columbia</strain>
    </source>
</reference>
<reference key="3">
    <citation type="journal article" date="2017" name="Plant J.">
        <title>Araport11: a complete reannotation of the Arabidopsis thaliana reference genome.</title>
        <authorList>
            <person name="Cheng C.Y."/>
            <person name="Krishnakumar V."/>
            <person name="Chan A.P."/>
            <person name="Thibaud-Nissen F."/>
            <person name="Schobel S."/>
            <person name="Town C.D."/>
        </authorList>
    </citation>
    <scope>GENOME REANNOTATION</scope>
    <source>
        <strain>cv. Columbia</strain>
    </source>
</reference>
<reference key="4">
    <citation type="journal article" date="2003" name="Science">
        <title>Empirical analysis of transcriptional activity in the Arabidopsis genome.</title>
        <authorList>
            <person name="Yamada K."/>
            <person name="Lim J."/>
            <person name="Dale J.M."/>
            <person name="Chen H."/>
            <person name="Shinn P."/>
            <person name="Palm C.J."/>
            <person name="Southwick A.M."/>
            <person name="Wu H.C."/>
            <person name="Kim C.J."/>
            <person name="Nguyen M."/>
            <person name="Pham P.K."/>
            <person name="Cheuk R.F."/>
            <person name="Karlin-Newmann G."/>
            <person name="Liu S.X."/>
            <person name="Lam B."/>
            <person name="Sakano H."/>
            <person name="Wu T."/>
            <person name="Yu G."/>
            <person name="Miranda M."/>
            <person name="Quach H.L."/>
            <person name="Tripp M."/>
            <person name="Chang C.H."/>
            <person name="Lee J.M."/>
            <person name="Toriumi M.J."/>
            <person name="Chan M.M."/>
            <person name="Tang C.C."/>
            <person name="Onodera C.S."/>
            <person name="Deng J.M."/>
            <person name="Akiyama K."/>
            <person name="Ansari Y."/>
            <person name="Arakawa T."/>
            <person name="Banh J."/>
            <person name="Banno F."/>
            <person name="Bowser L."/>
            <person name="Brooks S.Y."/>
            <person name="Carninci P."/>
            <person name="Chao Q."/>
            <person name="Choy N."/>
            <person name="Enju A."/>
            <person name="Goldsmith A.D."/>
            <person name="Gurjal M."/>
            <person name="Hansen N.F."/>
            <person name="Hayashizaki Y."/>
            <person name="Johnson-Hopson C."/>
            <person name="Hsuan V.W."/>
            <person name="Iida K."/>
            <person name="Karnes M."/>
            <person name="Khan S."/>
            <person name="Koesema E."/>
            <person name="Ishida J."/>
            <person name="Jiang P.X."/>
            <person name="Jones T."/>
            <person name="Kawai J."/>
            <person name="Kamiya A."/>
            <person name="Meyers C."/>
            <person name="Nakajima M."/>
            <person name="Narusaka M."/>
            <person name="Seki M."/>
            <person name="Sakurai T."/>
            <person name="Satou M."/>
            <person name="Tamse R."/>
            <person name="Vaysberg M."/>
            <person name="Wallender E.K."/>
            <person name="Wong C."/>
            <person name="Yamamura Y."/>
            <person name="Yuan S."/>
            <person name="Shinozaki K."/>
            <person name="Davis R.W."/>
            <person name="Theologis A."/>
            <person name="Ecker J.R."/>
        </authorList>
    </citation>
    <scope>NUCLEOTIDE SEQUENCE [LARGE SCALE MRNA]</scope>
    <source>
        <strain>cv. Columbia</strain>
    </source>
</reference>
<reference key="5">
    <citation type="submission" date="2002-03" db="EMBL/GenBank/DDBJ databases">
        <title>Full-length cDNA from Arabidopsis thaliana.</title>
        <authorList>
            <person name="Brover V.V."/>
            <person name="Troukhan M.E."/>
            <person name="Alexandrov N.A."/>
            <person name="Lu Y.-P."/>
            <person name="Flavell R.B."/>
            <person name="Feldmann K.A."/>
        </authorList>
    </citation>
    <scope>NUCLEOTIDE SEQUENCE [LARGE SCALE MRNA]</scope>
</reference>
<reference key="6">
    <citation type="journal article" date="2001" name="Plant Cell">
        <title>Identification of Arabidopsis histone deacetylase HDA6 mutants that affect transgene expression.</title>
        <authorList>
            <person name="Murfett J."/>
            <person name="Wang X.-J."/>
            <person name="Hagen G."/>
            <person name="Guilfoyle T.J."/>
        </authorList>
    </citation>
    <scope>FUNCTION</scope>
    <scope>MUTAGENESIS OF GLY-127; GLY-284 AND ALA-294</scope>
</reference>
<reference key="7">
    <citation type="journal article" date="2002" name="EMBO J.">
        <title>HDA6, a putative histone deacetylase needed to enhance DNA methylation induced by double-stranded RNA.</title>
        <authorList>
            <person name="Aufsatz W."/>
            <person name="Mette M.F."/>
            <person name="van der Winden J."/>
            <person name="Matzke M."/>
            <person name="Matzke A.J.M."/>
        </authorList>
    </citation>
    <scope>FUNCTION</scope>
    <scope>MUTAGENESIS OF 459-ASP--SER-471</scope>
</reference>
<reference key="8">
    <citation type="journal article" date="2002" name="Nucleic Acids Res.">
        <title>Analysis of histone acetyltransferase and histone deacetylase families of Arabidopsis thaliana suggests functional diversification of chromatin modification among multicellular eukaryotes.</title>
        <authorList>
            <person name="Pandey R."/>
            <person name="Mueller A."/>
            <person name="Napoli C.A."/>
            <person name="Selinger D.A."/>
            <person name="Pikaard C.S."/>
            <person name="Richards E.J."/>
            <person name="Bender J."/>
            <person name="Mount D.W."/>
            <person name="Jorgensen R.A."/>
        </authorList>
    </citation>
    <scope>GENE FAMILY</scope>
    <scope>NOMENCLATURE</scope>
</reference>
<reference key="9">
    <citation type="journal article" date="2002" name="Plant J.">
        <title>COI1 links jasmonate signalling and fertility to the SCF ubiquitin-ligase complex in Arabidopsis.</title>
        <authorList>
            <person name="Devoto A."/>
            <person name="Nieto-Rostro M."/>
            <person name="Xie D."/>
            <person name="Ellis C."/>
            <person name="Harmston R."/>
            <person name="Patrick E."/>
            <person name="Davis J."/>
            <person name="Sherratt L."/>
            <person name="Coleman M."/>
            <person name="Turner J.G."/>
        </authorList>
    </citation>
    <scope>INTERACTION WITH COI1</scope>
</reference>
<reference key="10">
    <citation type="journal article" date="2004" name="Plant Cell">
        <title>Arabidopsis histone deacetylase HDA6 is required for maintenance of transcriptional gene silencing and determines nuclear organization of rDNA repeats.</title>
        <authorList>
            <person name="Probst A.V."/>
            <person name="Fagard M."/>
            <person name="Proux F."/>
            <person name="Mourrain P."/>
            <person name="Boutet S."/>
            <person name="Earley K."/>
            <person name="Lawrence R.J."/>
            <person name="Pikaard C.S."/>
            <person name="Murfett J."/>
            <person name="Furner I."/>
            <person name="Vaucheret H."/>
            <person name="Mittelsten Scheid O."/>
        </authorList>
    </citation>
    <scope>FUNCTION</scope>
    <scope>MUTAGENESIS OF GLY-16</scope>
</reference>
<reference key="11">
    <citation type="journal article" date="2005" name="Plant Cell">
        <title>HISTONE DEACETYLASE19 is involved in jasmonic acid and ethylene signaling of pathogen response in Arabidopsis.</title>
        <authorList>
            <person name="Zhou C."/>
            <person name="Zhang L."/>
            <person name="Duan J."/>
            <person name="Miki B."/>
            <person name="Wu K."/>
        </authorList>
    </citation>
    <scope>INDUCTION</scope>
</reference>
<reference key="12">
    <citation type="journal article" date="2006" name="Genes Dev.">
        <title>Erasure of histone acetylation by Arabidopsis HDA6 mediates large-scale gene silencing in nucleolar dominance.</title>
        <authorList>
            <person name="Earley K."/>
            <person name="Lawrence R.J."/>
            <person name="Pontes O."/>
            <person name="Reuther R."/>
            <person name="Enciso A.J."/>
            <person name="Silva M."/>
            <person name="Neves N."/>
            <person name="Gross M."/>
            <person name="Viegas W."/>
            <person name="Pikaard C.S."/>
        </authorList>
    </citation>
    <scope>FUNCTION</scope>
    <scope>SUBCELLULAR LOCATION</scope>
    <scope>ACTIVITY REGULATION</scope>
</reference>
<reference key="13">
    <citation type="journal article" date="2011" name="Plant Physiol.">
        <title>HISTONE DEACETYLASE6 interacts with FLOWERING LOCUS D and regulates flowering in Arabidopsis.</title>
        <authorList>
            <person name="Yu C.-W."/>
            <person name="Liu X."/>
            <person name="Luo M."/>
            <person name="Chen C."/>
            <person name="Lin X."/>
            <person name="Tian G."/>
            <person name="Lu Q."/>
            <person name="Cui Y."/>
            <person name="Wu K."/>
        </authorList>
    </citation>
    <scope>FUNCTION</scope>
    <scope>CATALYTIC ACTIVITY</scope>
    <scope>INTERACTION WITH FLD</scope>
</reference>
<reference key="14">
    <citation type="journal article" date="2012" name="J. Biol. Chem.">
        <title>The AT-hook motif-containing protein AHL22 regulates flowering initiation by modifying FLOWERING LOCUS T chromatin in Arabidopsis.</title>
        <authorList>
            <person name="Yun J."/>
            <person name="Kim Y.S."/>
            <person name="Jung J.H."/>
            <person name="Seo P.J."/>
            <person name="Park C.M."/>
        </authorList>
    </citation>
    <scope>INTERACTION WITH AHL22</scope>
</reference>
<reference key="15">
    <citation type="journal article" date="2012" name="Mol. Cell. Proteomics">
        <title>Comparative large-scale characterisation of plant vs. mammal proteins reveals similar and idiosyncratic N-alpha acetylation features.</title>
        <authorList>
            <person name="Bienvenut W.V."/>
            <person name="Sumpton D."/>
            <person name="Martinez A."/>
            <person name="Lilla S."/>
            <person name="Espagne C."/>
            <person name="Meinnel T."/>
            <person name="Giglione C."/>
        </authorList>
    </citation>
    <scope>ACETYLATION [LARGE SCALE ANALYSIS] AT MET-1</scope>
    <scope>IDENTIFICATION BY MASS SPECTROMETRY [LARGE SCALE ANALYSIS]</scope>
</reference>
<reference key="16">
    <citation type="journal article" date="2012" name="PLoS Genet.">
        <title>Histone deacetylase HDA6 is functionally associated with AS1 in repression of KNOX genes in arabidopsis.</title>
        <authorList>
            <person name="Luo M."/>
            <person name="Yu C.W."/>
            <person name="Chen F.F."/>
            <person name="Zhao L."/>
            <person name="Tian G."/>
            <person name="Liu X."/>
            <person name="Cui Y."/>
            <person name="Yang J.Y."/>
            <person name="Wu K."/>
        </authorList>
    </citation>
    <scope>FUNCTION</scope>
    <scope>INTERACTION WITH AS1</scope>
    <scope>SUBCELLULAR LOCATION</scope>
    <scope>DISRUPTION PHENOTYPE</scope>
</reference>
<reference key="17">
    <citation type="journal article" date="2014" name="Plant Cell">
        <title>Chromatin-dependent repression of the Arabidopsis floral integrator genes involves plant specific PHD-containing proteins.</title>
        <authorList>
            <person name="Lopez-Gonzalez L."/>
            <person name="Mouriz A."/>
            <person name="Narro-Diego L."/>
            <person name="Bustos R."/>
            <person name="Martinez-Zapater J.M."/>
            <person name="Jarillo J.A."/>
            <person name="Pineiro M."/>
        </authorList>
    </citation>
    <scope>INTERACTION WITH EBS AND SHL</scope>
    <source>
        <strain>cv. Columbia</strain>
        <strain>cv. Landsberg erecta</strain>
    </source>
</reference>
<reference key="18">
    <citation type="journal article" date="2015" name="Plant J.">
        <title>Regulation of flowering time by the histone deacetylase HDA5 in Arabidopsis.</title>
        <authorList>
            <person name="Luo M."/>
            <person name="Tai R."/>
            <person name="Yu C.W."/>
            <person name="Yang S."/>
            <person name="Chen C.Y."/>
            <person name="Lin W.D."/>
            <person name="Schmidt W."/>
            <person name="Wu K."/>
        </authorList>
    </citation>
    <scope>FUNCTION</scope>
    <scope>INTERACTION WITH HDA5</scope>
</reference>
<reference key="19">
    <citation type="journal article" date="2017" name="J. Biosci.">
        <title>AtMBD6, a methyl CpG binding domain protein, maintains gene silencing in Arabidopsis by interacting with RNA binding proteins.</title>
        <authorList>
            <person name="Parida A.P."/>
            <person name="Sharma A."/>
            <person name="Sharma A.K."/>
        </authorList>
    </citation>
    <scope>INTERACTION WITH MBD6</scope>
</reference>